<proteinExistence type="inferred from homology"/>
<dbReference type="EC" id="5.6.1.7" evidence="1"/>
<dbReference type="EMBL" id="CP000359">
    <property type="protein sequence ID" value="ABF46525.1"/>
    <property type="molecule type" value="Genomic_DNA"/>
</dbReference>
<dbReference type="RefSeq" id="WP_011531346.1">
    <property type="nucleotide sequence ID" value="NC_008025.1"/>
</dbReference>
<dbReference type="SMR" id="Q1IW59"/>
<dbReference type="STRING" id="319795.Dgeo_2231"/>
<dbReference type="KEGG" id="dge:Dgeo_2231"/>
<dbReference type="eggNOG" id="COG0459">
    <property type="taxonomic scope" value="Bacteria"/>
</dbReference>
<dbReference type="HOGENOM" id="CLU_016503_3_0_0"/>
<dbReference type="Proteomes" id="UP000002431">
    <property type="component" value="Chromosome"/>
</dbReference>
<dbReference type="GO" id="GO:0005737">
    <property type="term" value="C:cytoplasm"/>
    <property type="evidence" value="ECO:0007669"/>
    <property type="project" value="UniProtKB-SubCell"/>
</dbReference>
<dbReference type="GO" id="GO:0005524">
    <property type="term" value="F:ATP binding"/>
    <property type="evidence" value="ECO:0007669"/>
    <property type="project" value="UniProtKB-UniRule"/>
</dbReference>
<dbReference type="GO" id="GO:0140662">
    <property type="term" value="F:ATP-dependent protein folding chaperone"/>
    <property type="evidence" value="ECO:0007669"/>
    <property type="project" value="InterPro"/>
</dbReference>
<dbReference type="GO" id="GO:0016853">
    <property type="term" value="F:isomerase activity"/>
    <property type="evidence" value="ECO:0007669"/>
    <property type="project" value="UniProtKB-KW"/>
</dbReference>
<dbReference type="GO" id="GO:0051082">
    <property type="term" value="F:unfolded protein binding"/>
    <property type="evidence" value="ECO:0007669"/>
    <property type="project" value="UniProtKB-UniRule"/>
</dbReference>
<dbReference type="GO" id="GO:0042026">
    <property type="term" value="P:protein refolding"/>
    <property type="evidence" value="ECO:0007669"/>
    <property type="project" value="UniProtKB-UniRule"/>
</dbReference>
<dbReference type="CDD" id="cd03344">
    <property type="entry name" value="GroEL"/>
    <property type="match status" value="1"/>
</dbReference>
<dbReference type="FunFam" id="3.50.7.10:FF:000001">
    <property type="entry name" value="60 kDa chaperonin"/>
    <property type="match status" value="1"/>
</dbReference>
<dbReference type="Gene3D" id="3.50.7.10">
    <property type="entry name" value="GroEL"/>
    <property type="match status" value="1"/>
</dbReference>
<dbReference type="Gene3D" id="1.10.560.10">
    <property type="entry name" value="GroEL-like equatorial domain"/>
    <property type="match status" value="1"/>
</dbReference>
<dbReference type="Gene3D" id="3.30.260.10">
    <property type="entry name" value="TCP-1-like chaperonin intermediate domain"/>
    <property type="match status" value="1"/>
</dbReference>
<dbReference type="HAMAP" id="MF_00600">
    <property type="entry name" value="CH60"/>
    <property type="match status" value="1"/>
</dbReference>
<dbReference type="InterPro" id="IPR001844">
    <property type="entry name" value="Cpn60/GroEL"/>
</dbReference>
<dbReference type="InterPro" id="IPR002423">
    <property type="entry name" value="Cpn60/GroEL/TCP-1"/>
</dbReference>
<dbReference type="InterPro" id="IPR027409">
    <property type="entry name" value="GroEL-like_apical_dom_sf"/>
</dbReference>
<dbReference type="InterPro" id="IPR027413">
    <property type="entry name" value="GROEL-like_equatorial_sf"/>
</dbReference>
<dbReference type="InterPro" id="IPR027410">
    <property type="entry name" value="TCP-1-like_intermed_sf"/>
</dbReference>
<dbReference type="NCBIfam" id="TIGR02348">
    <property type="entry name" value="GroEL"/>
    <property type="match status" value="1"/>
</dbReference>
<dbReference type="NCBIfam" id="NF000592">
    <property type="entry name" value="PRK00013.1"/>
    <property type="match status" value="1"/>
</dbReference>
<dbReference type="NCBIfam" id="NF009487">
    <property type="entry name" value="PRK12849.1"/>
    <property type="match status" value="1"/>
</dbReference>
<dbReference type="NCBIfam" id="NF009488">
    <property type="entry name" value="PRK12850.1"/>
    <property type="match status" value="1"/>
</dbReference>
<dbReference type="NCBIfam" id="NF009489">
    <property type="entry name" value="PRK12851.1"/>
    <property type="match status" value="1"/>
</dbReference>
<dbReference type="PANTHER" id="PTHR45633">
    <property type="entry name" value="60 KDA HEAT SHOCK PROTEIN, MITOCHONDRIAL"/>
    <property type="match status" value="1"/>
</dbReference>
<dbReference type="Pfam" id="PF00118">
    <property type="entry name" value="Cpn60_TCP1"/>
    <property type="match status" value="1"/>
</dbReference>
<dbReference type="PRINTS" id="PR00298">
    <property type="entry name" value="CHAPERONIN60"/>
</dbReference>
<dbReference type="SUPFAM" id="SSF52029">
    <property type="entry name" value="GroEL apical domain-like"/>
    <property type="match status" value="1"/>
</dbReference>
<dbReference type="SUPFAM" id="SSF48592">
    <property type="entry name" value="GroEL equatorial domain-like"/>
    <property type="match status" value="1"/>
</dbReference>
<dbReference type="SUPFAM" id="SSF54849">
    <property type="entry name" value="GroEL-intermediate domain like"/>
    <property type="match status" value="1"/>
</dbReference>
<comment type="function">
    <text evidence="1">Together with its co-chaperonin GroES, plays an essential role in assisting protein folding. The GroEL-GroES system forms a nano-cage that allows encapsulation of the non-native substrate proteins and provides a physical environment optimized to promote and accelerate protein folding.</text>
</comment>
<comment type="catalytic activity">
    <reaction evidence="1">
        <text>ATP + H2O + a folded polypeptide = ADP + phosphate + an unfolded polypeptide.</text>
        <dbReference type="EC" id="5.6.1.7"/>
    </reaction>
</comment>
<comment type="subunit">
    <text evidence="1">Forms a cylinder of 14 subunits composed of two heptameric rings stacked back-to-back. Interacts with the co-chaperonin GroES.</text>
</comment>
<comment type="subcellular location">
    <subcellularLocation>
        <location evidence="1">Cytoplasm</location>
    </subcellularLocation>
</comment>
<comment type="similarity">
    <text evidence="1">Belongs to the chaperonin (HSP60) family.</text>
</comment>
<reference key="1">
    <citation type="submission" date="2006-04" db="EMBL/GenBank/DDBJ databases">
        <title>Complete sequence of chromosome of Deinococcus geothermalis DSM 11300.</title>
        <authorList>
            <person name="Copeland A."/>
            <person name="Lucas S."/>
            <person name="Lapidus A."/>
            <person name="Barry K."/>
            <person name="Detter J.C."/>
            <person name="Glavina del Rio T."/>
            <person name="Hammon N."/>
            <person name="Israni S."/>
            <person name="Dalin E."/>
            <person name="Tice H."/>
            <person name="Pitluck S."/>
            <person name="Brettin T."/>
            <person name="Bruce D."/>
            <person name="Han C."/>
            <person name="Tapia R."/>
            <person name="Saunders E."/>
            <person name="Gilna P."/>
            <person name="Schmutz J."/>
            <person name="Larimer F."/>
            <person name="Land M."/>
            <person name="Hauser L."/>
            <person name="Kyrpides N."/>
            <person name="Kim E."/>
            <person name="Daly M.J."/>
            <person name="Fredrickson J.K."/>
            <person name="Makarova K.S."/>
            <person name="Gaidamakova E.K."/>
            <person name="Zhai M."/>
            <person name="Richardson P."/>
        </authorList>
    </citation>
    <scope>NUCLEOTIDE SEQUENCE [LARGE SCALE GENOMIC DNA]</scope>
    <source>
        <strain>DSM 11300 / CIP 105573 / AG-3a</strain>
    </source>
</reference>
<sequence length="545" mass="57785">MAKQLVFDEHARRSLERGVNAVANAVKVTLGPRGRNVVIEKKFGSPTITKDGVTVAKEVELEDKLENIGAQLLKEIASKTNDITGDGTTTATVLGQAIVKEGLRNVAAGANPLALKRGIEKAVAAATEEIKKLAVPVEDSNAIKKVAGISANDAQVGEEIANAMDKVGKEGVITIEESKSFDTEVDVVEGMQFDKGYISPYFITNPDKMEAVLEDAYILINEKKISALKDLLPVLEKVAQTSRPLLIIAEDVEGEALATLIVNKLRGTLNIAAVKAPGFGDRRKEMLRDIAAVTGGQVVSEDLGHRLENVTLDMLGRAKRIRITKDETTIIDGMGNQAEIDARVNAIKAELETTDSDYAREKLQERLAKLAGGVAVIRVGAATETELKEKKHRYEDALSTARSAVEEGIVAGGGTTLLRVIPAVKQLAESLEGDEATGARILVRALEEPARQIAANAGDEGSVIVNAVLNSDKPRYGYNAATGEFVDDMVAAGIVDPAKVTRTALQNAASIGGLILTTEAIVSDKPEKEKAPAAAGAPDMGGMDF</sequence>
<accession>Q1IW59</accession>
<keyword id="KW-0067">ATP-binding</keyword>
<keyword id="KW-0143">Chaperone</keyword>
<keyword id="KW-0963">Cytoplasm</keyword>
<keyword id="KW-0413">Isomerase</keyword>
<keyword id="KW-0547">Nucleotide-binding</keyword>
<organism>
    <name type="scientific">Deinococcus geothermalis (strain DSM 11300 / CIP 105573 / AG-3a)</name>
    <dbReference type="NCBI Taxonomy" id="319795"/>
    <lineage>
        <taxon>Bacteria</taxon>
        <taxon>Thermotogati</taxon>
        <taxon>Deinococcota</taxon>
        <taxon>Deinococci</taxon>
        <taxon>Deinococcales</taxon>
        <taxon>Deinococcaceae</taxon>
        <taxon>Deinococcus</taxon>
    </lineage>
</organism>
<evidence type="ECO:0000255" key="1">
    <source>
        <dbReference type="HAMAP-Rule" id="MF_00600"/>
    </source>
</evidence>
<evidence type="ECO:0000256" key="2">
    <source>
        <dbReference type="SAM" id="MobiDB-lite"/>
    </source>
</evidence>
<gene>
    <name evidence="1" type="primary">groEL</name>
    <name evidence="1" type="synonym">groL</name>
    <name type="ordered locus">Dgeo_2231</name>
</gene>
<name>CH60_DEIGD</name>
<protein>
    <recommendedName>
        <fullName evidence="1">Chaperonin GroEL</fullName>
        <ecNumber evidence="1">5.6.1.7</ecNumber>
    </recommendedName>
    <alternativeName>
        <fullName evidence="1">60 kDa chaperonin</fullName>
    </alternativeName>
    <alternativeName>
        <fullName evidence="1">Chaperonin-60</fullName>
        <shortName evidence="1">Cpn60</shortName>
    </alternativeName>
</protein>
<feature type="chain" id="PRO_0000256904" description="Chaperonin GroEL">
    <location>
        <begin position="1"/>
        <end position="545"/>
    </location>
</feature>
<feature type="region of interest" description="Disordered" evidence="2">
    <location>
        <begin position="525"/>
        <end position="545"/>
    </location>
</feature>
<feature type="compositionally biased region" description="Low complexity" evidence="2">
    <location>
        <begin position="532"/>
        <end position="545"/>
    </location>
</feature>
<feature type="binding site" evidence="1">
    <location>
        <begin position="29"/>
        <end position="32"/>
    </location>
    <ligand>
        <name>ATP</name>
        <dbReference type="ChEBI" id="CHEBI:30616"/>
    </ligand>
</feature>
<feature type="binding site" evidence="1">
    <location>
        <position position="50"/>
    </location>
    <ligand>
        <name>ATP</name>
        <dbReference type="ChEBI" id="CHEBI:30616"/>
    </ligand>
</feature>
<feature type="binding site" evidence="1">
    <location>
        <begin position="86"/>
        <end position="90"/>
    </location>
    <ligand>
        <name>ATP</name>
        <dbReference type="ChEBI" id="CHEBI:30616"/>
    </ligand>
</feature>
<feature type="binding site" evidence="1">
    <location>
        <position position="413"/>
    </location>
    <ligand>
        <name>ATP</name>
        <dbReference type="ChEBI" id="CHEBI:30616"/>
    </ligand>
</feature>
<feature type="binding site" evidence="1">
    <location>
        <begin position="479"/>
        <end position="481"/>
    </location>
    <ligand>
        <name>ATP</name>
        <dbReference type="ChEBI" id="CHEBI:30616"/>
    </ligand>
</feature>
<feature type="binding site" evidence="1">
    <location>
        <position position="496"/>
    </location>
    <ligand>
        <name>ATP</name>
        <dbReference type="ChEBI" id="CHEBI:30616"/>
    </ligand>
</feature>